<name>UBIE_HAHCH</name>
<accession>Q2SN12</accession>
<organism>
    <name type="scientific">Hahella chejuensis (strain KCTC 2396)</name>
    <dbReference type="NCBI Taxonomy" id="349521"/>
    <lineage>
        <taxon>Bacteria</taxon>
        <taxon>Pseudomonadati</taxon>
        <taxon>Pseudomonadota</taxon>
        <taxon>Gammaproteobacteria</taxon>
        <taxon>Oceanospirillales</taxon>
        <taxon>Hahellaceae</taxon>
        <taxon>Hahella</taxon>
    </lineage>
</organism>
<gene>
    <name evidence="1" type="primary">ubiE</name>
    <name type="ordered locus">HCH_01082</name>
</gene>
<dbReference type="EC" id="2.1.1.163" evidence="1"/>
<dbReference type="EC" id="2.1.1.201" evidence="1"/>
<dbReference type="EMBL" id="CP000155">
    <property type="protein sequence ID" value="ABC27962.1"/>
    <property type="molecule type" value="Genomic_DNA"/>
</dbReference>
<dbReference type="RefSeq" id="WP_011395037.1">
    <property type="nucleotide sequence ID" value="NC_007645.1"/>
</dbReference>
<dbReference type="SMR" id="Q2SN12"/>
<dbReference type="STRING" id="349521.HCH_01082"/>
<dbReference type="KEGG" id="hch:HCH_01082"/>
<dbReference type="eggNOG" id="COG2226">
    <property type="taxonomic scope" value="Bacteria"/>
</dbReference>
<dbReference type="HOGENOM" id="CLU_037990_0_0_6"/>
<dbReference type="OrthoDB" id="9808140at2"/>
<dbReference type="UniPathway" id="UPA00079">
    <property type="reaction ID" value="UER00169"/>
</dbReference>
<dbReference type="UniPathway" id="UPA00232"/>
<dbReference type="Proteomes" id="UP000000238">
    <property type="component" value="Chromosome"/>
</dbReference>
<dbReference type="GO" id="GO:0008425">
    <property type="term" value="F:2-methoxy-6-polyprenyl-1,4-benzoquinol methyltransferase activity"/>
    <property type="evidence" value="ECO:0007669"/>
    <property type="project" value="UniProtKB-UniRule"/>
</dbReference>
<dbReference type="GO" id="GO:0043770">
    <property type="term" value="F:demethylmenaquinone methyltransferase activity"/>
    <property type="evidence" value="ECO:0007669"/>
    <property type="project" value="UniProtKB-UniRule"/>
</dbReference>
<dbReference type="GO" id="GO:0009060">
    <property type="term" value="P:aerobic respiration"/>
    <property type="evidence" value="ECO:0007669"/>
    <property type="project" value="UniProtKB-UniRule"/>
</dbReference>
<dbReference type="GO" id="GO:0009234">
    <property type="term" value="P:menaquinone biosynthetic process"/>
    <property type="evidence" value="ECO:0007669"/>
    <property type="project" value="UniProtKB-UniRule"/>
</dbReference>
<dbReference type="GO" id="GO:0032259">
    <property type="term" value="P:methylation"/>
    <property type="evidence" value="ECO:0007669"/>
    <property type="project" value="UniProtKB-KW"/>
</dbReference>
<dbReference type="CDD" id="cd02440">
    <property type="entry name" value="AdoMet_MTases"/>
    <property type="match status" value="1"/>
</dbReference>
<dbReference type="FunFam" id="3.40.50.150:FF:000014">
    <property type="entry name" value="Ubiquinone/menaquinone biosynthesis C-methyltransferase UbiE"/>
    <property type="match status" value="1"/>
</dbReference>
<dbReference type="Gene3D" id="3.40.50.150">
    <property type="entry name" value="Vaccinia Virus protein VP39"/>
    <property type="match status" value="1"/>
</dbReference>
<dbReference type="HAMAP" id="MF_01813">
    <property type="entry name" value="MenG_UbiE_methyltr"/>
    <property type="match status" value="1"/>
</dbReference>
<dbReference type="InterPro" id="IPR029063">
    <property type="entry name" value="SAM-dependent_MTases_sf"/>
</dbReference>
<dbReference type="InterPro" id="IPR004033">
    <property type="entry name" value="UbiE/COQ5_MeTrFase"/>
</dbReference>
<dbReference type="InterPro" id="IPR023576">
    <property type="entry name" value="UbiE/COQ5_MeTrFase_CS"/>
</dbReference>
<dbReference type="NCBIfam" id="TIGR01934">
    <property type="entry name" value="MenG_MenH_UbiE"/>
    <property type="match status" value="1"/>
</dbReference>
<dbReference type="NCBIfam" id="NF001240">
    <property type="entry name" value="PRK00216.1-1"/>
    <property type="match status" value="1"/>
</dbReference>
<dbReference type="NCBIfam" id="NF001244">
    <property type="entry name" value="PRK00216.1-5"/>
    <property type="match status" value="1"/>
</dbReference>
<dbReference type="PANTHER" id="PTHR43591:SF24">
    <property type="entry name" value="2-METHOXY-6-POLYPRENYL-1,4-BENZOQUINOL METHYLASE, MITOCHONDRIAL"/>
    <property type="match status" value="1"/>
</dbReference>
<dbReference type="PANTHER" id="PTHR43591">
    <property type="entry name" value="METHYLTRANSFERASE"/>
    <property type="match status" value="1"/>
</dbReference>
<dbReference type="Pfam" id="PF01209">
    <property type="entry name" value="Ubie_methyltran"/>
    <property type="match status" value="1"/>
</dbReference>
<dbReference type="SUPFAM" id="SSF53335">
    <property type="entry name" value="S-adenosyl-L-methionine-dependent methyltransferases"/>
    <property type="match status" value="1"/>
</dbReference>
<dbReference type="PROSITE" id="PS51608">
    <property type="entry name" value="SAM_MT_UBIE"/>
    <property type="match status" value="1"/>
</dbReference>
<dbReference type="PROSITE" id="PS01183">
    <property type="entry name" value="UBIE_1"/>
    <property type="match status" value="1"/>
</dbReference>
<dbReference type="PROSITE" id="PS01184">
    <property type="entry name" value="UBIE_2"/>
    <property type="match status" value="1"/>
</dbReference>
<evidence type="ECO:0000255" key="1">
    <source>
        <dbReference type="HAMAP-Rule" id="MF_01813"/>
    </source>
</evidence>
<feature type="chain" id="PRO_1000187772" description="Ubiquinone/menaquinone biosynthesis C-methyltransferase UbiE">
    <location>
        <begin position="1"/>
        <end position="249"/>
    </location>
</feature>
<feature type="binding site" evidence="1">
    <location>
        <position position="72"/>
    </location>
    <ligand>
        <name>S-adenosyl-L-methionine</name>
        <dbReference type="ChEBI" id="CHEBI:59789"/>
    </ligand>
</feature>
<feature type="binding site" evidence="1">
    <location>
        <position position="93"/>
    </location>
    <ligand>
        <name>S-adenosyl-L-methionine</name>
        <dbReference type="ChEBI" id="CHEBI:59789"/>
    </ligand>
</feature>
<feature type="binding site" evidence="1">
    <location>
        <begin position="121"/>
        <end position="122"/>
    </location>
    <ligand>
        <name>S-adenosyl-L-methionine</name>
        <dbReference type="ChEBI" id="CHEBI:59789"/>
    </ligand>
</feature>
<keyword id="KW-0474">Menaquinone biosynthesis</keyword>
<keyword id="KW-0489">Methyltransferase</keyword>
<keyword id="KW-1185">Reference proteome</keyword>
<keyword id="KW-0949">S-adenosyl-L-methionine</keyword>
<keyword id="KW-0808">Transferase</keyword>
<keyword id="KW-0831">Ubiquinone biosynthesis</keyword>
<reference key="1">
    <citation type="journal article" date="2005" name="Nucleic Acids Res.">
        <title>Genomic blueprint of Hahella chejuensis, a marine microbe producing an algicidal agent.</title>
        <authorList>
            <person name="Jeong H."/>
            <person name="Yim J.H."/>
            <person name="Lee C."/>
            <person name="Choi S.-H."/>
            <person name="Park Y.K."/>
            <person name="Yoon S.H."/>
            <person name="Hur C.-G."/>
            <person name="Kang H.-Y."/>
            <person name="Kim D."/>
            <person name="Lee H.H."/>
            <person name="Park K.H."/>
            <person name="Park S.-H."/>
            <person name="Park H.-S."/>
            <person name="Lee H.K."/>
            <person name="Oh T.K."/>
            <person name="Kim J.F."/>
        </authorList>
    </citation>
    <scope>NUCLEOTIDE SEQUENCE [LARGE SCALE GENOMIC DNA]</scope>
    <source>
        <strain>KCTC 2396</strain>
    </source>
</reference>
<protein>
    <recommendedName>
        <fullName evidence="1">Ubiquinone/menaquinone biosynthesis C-methyltransferase UbiE</fullName>
        <ecNumber evidence="1">2.1.1.163</ecNumber>
        <ecNumber evidence="1">2.1.1.201</ecNumber>
    </recommendedName>
    <alternativeName>
        <fullName evidence="1">2-methoxy-6-polyprenyl-1,4-benzoquinol methylase</fullName>
    </alternativeName>
    <alternativeName>
        <fullName evidence="1">Demethylmenaquinone methyltransferase</fullName>
    </alternativeName>
</protein>
<sequence length="249" mass="27461">MTERDTTHFGYKQVPVTEKESHVAKVFDSVAAKYDLMNDLMSMGIHRLWKRFTIDKSGVRAGASVLDIAGGTGDLTKKFSRLVGPSGKVVLADINASMLQVGRNQLLDHGYGDNIEFVQANAEALPFPDNSFDCVSIAFGLRNVTDKDQALREMQRVLRPGGRLLVLEFSKPTNPIVSKAYDVYSFSALPLMGSLVAQDSESYRYLAESIRMHPDQETLKSMMEQAGLCLCKYYNLTSGVVALHTGVKA</sequence>
<proteinExistence type="inferred from homology"/>
<comment type="function">
    <text evidence="1">Methyltransferase required for the conversion of demethylmenaquinol (DMKH2) to menaquinol (MKH2) and the conversion of 2-polyprenyl-6-methoxy-1,4-benzoquinol (DDMQH2) to 2-polyprenyl-3-methyl-6-methoxy-1,4-benzoquinol (DMQH2).</text>
</comment>
<comment type="catalytic activity">
    <reaction evidence="1">
        <text>a 2-demethylmenaquinol + S-adenosyl-L-methionine = a menaquinol + S-adenosyl-L-homocysteine + H(+)</text>
        <dbReference type="Rhea" id="RHEA:42640"/>
        <dbReference type="Rhea" id="RHEA-COMP:9539"/>
        <dbReference type="Rhea" id="RHEA-COMP:9563"/>
        <dbReference type="ChEBI" id="CHEBI:15378"/>
        <dbReference type="ChEBI" id="CHEBI:18151"/>
        <dbReference type="ChEBI" id="CHEBI:55437"/>
        <dbReference type="ChEBI" id="CHEBI:57856"/>
        <dbReference type="ChEBI" id="CHEBI:59789"/>
        <dbReference type="EC" id="2.1.1.163"/>
    </reaction>
</comment>
<comment type="catalytic activity">
    <reaction evidence="1">
        <text>a 2-methoxy-6-(all-trans-polyprenyl)benzene-1,4-diol + S-adenosyl-L-methionine = a 5-methoxy-2-methyl-3-(all-trans-polyprenyl)benzene-1,4-diol + S-adenosyl-L-homocysteine + H(+)</text>
        <dbReference type="Rhea" id="RHEA:28286"/>
        <dbReference type="Rhea" id="RHEA-COMP:10858"/>
        <dbReference type="Rhea" id="RHEA-COMP:10859"/>
        <dbReference type="ChEBI" id="CHEBI:15378"/>
        <dbReference type="ChEBI" id="CHEBI:57856"/>
        <dbReference type="ChEBI" id="CHEBI:59789"/>
        <dbReference type="ChEBI" id="CHEBI:84166"/>
        <dbReference type="ChEBI" id="CHEBI:84167"/>
        <dbReference type="EC" id="2.1.1.201"/>
    </reaction>
</comment>
<comment type="pathway">
    <text evidence="1">Quinol/quinone metabolism; menaquinone biosynthesis; menaquinol from 1,4-dihydroxy-2-naphthoate: step 2/2.</text>
</comment>
<comment type="pathway">
    <text evidence="1">Cofactor biosynthesis; ubiquinone biosynthesis.</text>
</comment>
<comment type="similarity">
    <text evidence="1">Belongs to the class I-like SAM-binding methyltransferase superfamily. MenG/UbiE family.</text>
</comment>